<evidence type="ECO:0000250" key="1">
    <source>
        <dbReference type="UniProtKB" id="P04140"/>
    </source>
</evidence>
<evidence type="ECO:0000255" key="2"/>
<evidence type="ECO:0000269" key="3">
    <source>
    </source>
</evidence>
<evidence type="ECO:0000269" key="4">
    <source>
    </source>
</evidence>
<evidence type="ECO:0000305" key="5"/>
<evidence type="ECO:0000305" key="6">
    <source>
    </source>
</evidence>
<protein>
    <recommendedName>
        <fullName evidence="5">Mercuric transport protein MerT</fullName>
    </recommendedName>
    <alternativeName>
        <fullName evidence="5">Mercury ion transport protein</fullName>
    </alternativeName>
</protein>
<proteinExistence type="inferred from homology"/>
<accession>P0A220</accession>
<accession>P04336</accession>
<reference key="1">
    <citation type="journal article" date="1984" name="Proc. Natl. Acad. Sci. U.S.A.">
        <title>Mercuric ion-resistance operons of plasmid R100 and transposon Tn501: the beginning of the operon including the regulatory region and the first two structural genes.</title>
        <authorList>
            <person name="Misra T.K."/>
            <person name="Brown N.L."/>
            <person name="Fritzinger D.C."/>
            <person name="Pridmore R.D."/>
            <person name="Barnes W.M."/>
            <person name="Haberstroh L."/>
            <person name="Silver S."/>
        </authorList>
    </citation>
    <scope>NUCLEOTIDE SEQUENCE [GENOMIC DNA]</scope>
    <scope>PROBABLE FUNCTION</scope>
</reference>
<reference key="2">
    <citation type="journal article" date="1984" name="J. Mol. Appl. Genet.">
        <title>The DNA sequence of the mercury resistance operon of the IncFII plasmid NR1.</title>
        <authorList>
            <person name="Barrineau P."/>
            <person name="Gilbert P."/>
            <person name="Jackson W.J."/>
            <person name="Jones C.S."/>
            <person name="Summers A.O."/>
            <person name="Wisdom S."/>
        </authorList>
    </citation>
    <scope>NUCLEOTIDE SEQUENCE [GENOMIC DNA]</scope>
    <source>
        <transposon>Tn21</transposon>
    </source>
</reference>
<reference key="3">
    <citation type="journal article" date="1992" name="J. Bacteriol.">
        <title>Roles of the Tn21 merT, merP, and merC gene products in mercury resistance and mercury binding.</title>
        <authorList>
            <person name="Hamlett N.V."/>
            <person name="Landale E.C."/>
            <person name="Davis B.H."/>
            <person name="Summers A.O."/>
        </authorList>
    </citation>
    <scope>FUNCTION</scope>
    <scope>DISRUPTION PHENOTYPE</scope>
</reference>
<dbReference type="EMBL" id="J01730">
    <property type="protein sequence ID" value="AAA92261.1"/>
    <property type="molecule type" value="Genomic_DNA"/>
</dbReference>
<dbReference type="EMBL" id="K03089">
    <property type="protein sequence ID" value="AAB59075.1"/>
    <property type="molecule type" value="Genomic_DNA"/>
</dbReference>
<dbReference type="PIR" id="A04458">
    <property type="entry name" value="QQEBHT"/>
</dbReference>
<dbReference type="RefSeq" id="WP_001294663.1">
    <property type="nucleotide sequence ID" value="NZ_WPET01000167.1"/>
</dbReference>
<dbReference type="GO" id="GO:0005886">
    <property type="term" value="C:plasma membrane"/>
    <property type="evidence" value="ECO:0007669"/>
    <property type="project" value="UniProtKB-SubCell"/>
</dbReference>
<dbReference type="GO" id="GO:0015097">
    <property type="term" value="F:mercury ion transmembrane transporter activity"/>
    <property type="evidence" value="ECO:0007669"/>
    <property type="project" value="InterPro"/>
</dbReference>
<dbReference type="GO" id="GO:0046872">
    <property type="term" value="F:metal ion binding"/>
    <property type="evidence" value="ECO:0007669"/>
    <property type="project" value="UniProtKB-KW"/>
</dbReference>
<dbReference type="Gene3D" id="1.10.287.910">
    <property type="entry name" value="bacterial mercury transporter, merf"/>
    <property type="match status" value="1"/>
</dbReference>
<dbReference type="InterPro" id="IPR003457">
    <property type="entry name" value="Transprt_MerT"/>
</dbReference>
<dbReference type="NCBIfam" id="NF010314">
    <property type="entry name" value="PRK13751.2"/>
    <property type="match status" value="1"/>
</dbReference>
<dbReference type="Pfam" id="PF02411">
    <property type="entry name" value="MerT"/>
    <property type="match status" value="1"/>
</dbReference>
<gene>
    <name type="primary">merT</name>
</gene>
<feature type="chain" id="PRO_0000096435" description="Mercuric transport protein MerT">
    <location>
        <begin position="1"/>
        <end position="116"/>
    </location>
</feature>
<feature type="transmembrane region" description="Helical" evidence="2">
    <location>
        <begin position="16"/>
        <end position="36"/>
    </location>
</feature>
<feature type="transmembrane region" description="Helical" evidence="2">
    <location>
        <begin position="46"/>
        <end position="66"/>
    </location>
</feature>
<feature type="transmembrane region" description="Helical" evidence="2">
    <location>
        <begin position="94"/>
        <end position="114"/>
    </location>
</feature>
<feature type="binding site" evidence="1">
    <location>
        <position position="24"/>
    </location>
    <ligand>
        <name>Hg(2+)</name>
        <dbReference type="ChEBI" id="CHEBI:16793"/>
    </ligand>
</feature>
<feature type="binding site" evidence="1">
    <location>
        <position position="25"/>
    </location>
    <ligand>
        <name>Hg(2+)</name>
        <dbReference type="ChEBI" id="CHEBI:16793"/>
    </ligand>
</feature>
<feature type="binding site" evidence="1">
    <location>
        <position position="76"/>
    </location>
    <ligand>
        <name>Hg(2+)</name>
        <dbReference type="ChEBI" id="CHEBI:16793"/>
    </ligand>
</feature>
<feature type="binding site" evidence="1">
    <location>
        <position position="82"/>
    </location>
    <ligand>
        <name>Hg(2+)</name>
        <dbReference type="ChEBI" id="CHEBI:16793"/>
    </ligand>
</feature>
<name>MERT_SHIFL</name>
<organism>
    <name type="scientific">Shigella flexneri</name>
    <dbReference type="NCBI Taxonomy" id="623"/>
    <lineage>
        <taxon>Bacteria</taxon>
        <taxon>Pseudomonadati</taxon>
        <taxon>Pseudomonadota</taxon>
        <taxon>Gammaproteobacteria</taxon>
        <taxon>Enterobacterales</taxon>
        <taxon>Enterobacteriaceae</taxon>
        <taxon>Shigella</taxon>
    </lineage>
</organism>
<sequence>MSEPQNGRGALFAGGLAAILASTCCLGPLVLVALGFSGAWIGNLTVLEPYRPLFIGAALVALFFAWKRIYRPVQACKPGEVCAIPQVRATYKLIFWIVAVLVLVALGFPYVVPFFY</sequence>
<keyword id="KW-0997">Cell inner membrane</keyword>
<keyword id="KW-1003">Cell membrane</keyword>
<keyword id="KW-0472">Membrane</keyword>
<keyword id="KW-0475">Mercuric resistance</keyword>
<keyword id="KW-0476">Mercury</keyword>
<keyword id="KW-0479">Metal-binding</keyword>
<keyword id="KW-0614">Plasmid</keyword>
<keyword id="KW-0812">Transmembrane</keyword>
<keyword id="KW-1133">Transmembrane helix</keyword>
<keyword id="KW-0813">Transport</keyword>
<keyword id="KW-0814">Transposable element</keyword>
<comment type="function">
    <text evidence="3 4 6">Involved in mercury resistance (PubMed:1328156, PubMed:6091128). Probably transfers a mercuric ion from the periplasmic Hg(2+)-binding protein MerP to the cytoplasmic mercuric reductase MerA (Probable).</text>
</comment>
<comment type="subcellular location">
    <subcellularLocation>
        <location evidence="5">Cell inner membrane</location>
        <topology evidence="2">Multi-pass membrane protein</topology>
    </subcellularLocation>
</comment>
<comment type="disruption phenotype">
    <text evidence="3">Mutation decreases resistance to mercury.</text>
</comment>
<comment type="similarity">
    <text evidence="5">Belongs to the MerT family.</text>
</comment>
<geneLocation type="plasmid">
    <name>IncFII R100</name>
    <name>NR1</name>
</geneLocation>